<organism>
    <name type="scientific">Neisseria gonorrhoeae (strain NCCP11945)</name>
    <dbReference type="NCBI Taxonomy" id="521006"/>
    <lineage>
        <taxon>Bacteria</taxon>
        <taxon>Pseudomonadati</taxon>
        <taxon>Pseudomonadota</taxon>
        <taxon>Betaproteobacteria</taxon>
        <taxon>Neisseriales</taxon>
        <taxon>Neisseriaceae</taxon>
        <taxon>Neisseria</taxon>
    </lineage>
</organism>
<comment type="function">
    <text evidence="1">Involved in allosteric regulation of aspartate carbamoyltransferase.</text>
</comment>
<comment type="cofactor">
    <cofactor evidence="1">
        <name>Zn(2+)</name>
        <dbReference type="ChEBI" id="CHEBI:29105"/>
    </cofactor>
    <text evidence="1">Binds 1 zinc ion per subunit.</text>
</comment>
<comment type="subunit">
    <text evidence="1">Contains catalytic and regulatory chains.</text>
</comment>
<comment type="similarity">
    <text evidence="1">Belongs to the PyrI family.</text>
</comment>
<name>PYRI_NEIG2</name>
<evidence type="ECO:0000255" key="1">
    <source>
        <dbReference type="HAMAP-Rule" id="MF_00002"/>
    </source>
</evidence>
<gene>
    <name evidence="1" type="primary">pyrI</name>
    <name type="ordered locus">NGK_2391</name>
</gene>
<protein>
    <recommendedName>
        <fullName evidence="1">Aspartate carbamoyltransferase regulatory chain</fullName>
    </recommendedName>
</protein>
<proteinExistence type="inferred from homology"/>
<reference key="1">
    <citation type="journal article" date="2008" name="J. Bacteriol.">
        <title>Complete genome sequence of Neisseria gonorrhoeae NCCP11945.</title>
        <authorList>
            <person name="Chung G.T."/>
            <person name="Yoo J.S."/>
            <person name="Oh H.B."/>
            <person name="Lee Y.S."/>
            <person name="Cha S.H."/>
            <person name="Kim S.J."/>
            <person name="Yoo C.K."/>
        </authorList>
    </citation>
    <scope>NUCLEOTIDE SEQUENCE [LARGE SCALE GENOMIC DNA]</scope>
    <source>
        <strain>NCCP11945</strain>
    </source>
</reference>
<feature type="chain" id="PRO_1000088829" description="Aspartate carbamoyltransferase regulatory chain">
    <location>
        <begin position="1"/>
        <end position="152"/>
    </location>
</feature>
<feature type="binding site" evidence="1">
    <location>
        <position position="108"/>
    </location>
    <ligand>
        <name>Zn(2+)</name>
        <dbReference type="ChEBI" id="CHEBI:29105"/>
    </ligand>
</feature>
<feature type="binding site" evidence="1">
    <location>
        <position position="113"/>
    </location>
    <ligand>
        <name>Zn(2+)</name>
        <dbReference type="ChEBI" id="CHEBI:29105"/>
    </ligand>
</feature>
<feature type="binding site" evidence="1">
    <location>
        <position position="137"/>
    </location>
    <ligand>
        <name>Zn(2+)</name>
        <dbReference type="ChEBI" id="CHEBI:29105"/>
    </ligand>
</feature>
<feature type="binding site" evidence="1">
    <location>
        <position position="140"/>
    </location>
    <ligand>
        <name>Zn(2+)</name>
        <dbReference type="ChEBI" id="CHEBI:29105"/>
    </ligand>
</feature>
<accession>B4RPW8</accession>
<dbReference type="EMBL" id="CP001050">
    <property type="protein sequence ID" value="ACF30993.1"/>
    <property type="molecule type" value="Genomic_DNA"/>
</dbReference>
<dbReference type="RefSeq" id="WP_003690135.1">
    <property type="nucleotide sequence ID" value="NC_011035.1"/>
</dbReference>
<dbReference type="SMR" id="B4RPW8"/>
<dbReference type="GeneID" id="66754252"/>
<dbReference type="KEGG" id="ngk:NGK_2391"/>
<dbReference type="HOGENOM" id="CLU_128576_0_0_4"/>
<dbReference type="Proteomes" id="UP000002564">
    <property type="component" value="Chromosome"/>
</dbReference>
<dbReference type="GO" id="GO:0009347">
    <property type="term" value="C:aspartate carbamoyltransferase complex"/>
    <property type="evidence" value="ECO:0007669"/>
    <property type="project" value="InterPro"/>
</dbReference>
<dbReference type="GO" id="GO:0046872">
    <property type="term" value="F:metal ion binding"/>
    <property type="evidence" value="ECO:0007669"/>
    <property type="project" value="UniProtKB-KW"/>
</dbReference>
<dbReference type="GO" id="GO:0006207">
    <property type="term" value="P:'de novo' pyrimidine nucleobase biosynthetic process"/>
    <property type="evidence" value="ECO:0007669"/>
    <property type="project" value="InterPro"/>
</dbReference>
<dbReference type="GO" id="GO:0006221">
    <property type="term" value="P:pyrimidine nucleotide biosynthetic process"/>
    <property type="evidence" value="ECO:0007669"/>
    <property type="project" value="UniProtKB-UniRule"/>
</dbReference>
<dbReference type="Gene3D" id="2.30.30.20">
    <property type="entry name" value="Aspartate carbamoyltransferase regulatory subunit, C-terminal domain"/>
    <property type="match status" value="1"/>
</dbReference>
<dbReference type="Gene3D" id="3.30.70.140">
    <property type="entry name" value="Aspartate carbamoyltransferase regulatory subunit, N-terminal domain"/>
    <property type="match status" value="1"/>
</dbReference>
<dbReference type="HAMAP" id="MF_00002">
    <property type="entry name" value="Asp_carb_tr_reg"/>
    <property type="match status" value="1"/>
</dbReference>
<dbReference type="InterPro" id="IPR020545">
    <property type="entry name" value="Asp_carbamoyltransf_reg_N"/>
</dbReference>
<dbReference type="InterPro" id="IPR002801">
    <property type="entry name" value="Asp_carbamoylTrfase_reg"/>
</dbReference>
<dbReference type="InterPro" id="IPR020542">
    <property type="entry name" value="Asp_carbamoyltrfase_reg_C"/>
</dbReference>
<dbReference type="InterPro" id="IPR036792">
    <property type="entry name" value="Asp_carbatrfase_reg_C_sf"/>
</dbReference>
<dbReference type="InterPro" id="IPR036793">
    <property type="entry name" value="Asp_carbatrfase_reg_N_sf"/>
</dbReference>
<dbReference type="NCBIfam" id="TIGR00240">
    <property type="entry name" value="ATCase_reg"/>
    <property type="match status" value="1"/>
</dbReference>
<dbReference type="PANTHER" id="PTHR35805">
    <property type="entry name" value="ASPARTATE CARBAMOYLTRANSFERASE REGULATORY CHAIN"/>
    <property type="match status" value="1"/>
</dbReference>
<dbReference type="PANTHER" id="PTHR35805:SF1">
    <property type="entry name" value="ASPARTATE CARBAMOYLTRANSFERASE REGULATORY CHAIN"/>
    <property type="match status" value="1"/>
</dbReference>
<dbReference type="Pfam" id="PF01948">
    <property type="entry name" value="PyrI"/>
    <property type="match status" value="1"/>
</dbReference>
<dbReference type="Pfam" id="PF02748">
    <property type="entry name" value="PyrI_C"/>
    <property type="match status" value="1"/>
</dbReference>
<dbReference type="SUPFAM" id="SSF57825">
    <property type="entry name" value="Aspartate carbamoyltransferase, Regulatory-chain, C-terminal domain"/>
    <property type="match status" value="1"/>
</dbReference>
<dbReference type="SUPFAM" id="SSF54893">
    <property type="entry name" value="Aspartate carbamoyltransferase, Regulatory-chain, N-terminal domain"/>
    <property type="match status" value="1"/>
</dbReference>
<keyword id="KW-0479">Metal-binding</keyword>
<keyword id="KW-0665">Pyrimidine biosynthesis</keyword>
<keyword id="KW-0862">Zinc</keyword>
<sequence>MEAQKLSVEAIEKGTVIDHIPAGRGLTILRQFKLLHYGNAVTVGFNLPSKTQGSKDIIKIKGVCLDDKAADRLALFAPEAVVNTIDNFKVVQKRHLTLPDEIAEVFRCPNPNCAGHGEPVKSRFYVKKHNGQTRLKCHYCEKTYNRDSVAEA</sequence>